<reference key="1">
    <citation type="journal article" date="1993" name="J. Biol. Chem.">
        <title>Cloning of a cDNA for a novel insulin-like peptide of the testicular Leydig cells.</title>
        <authorList>
            <person name="Adham I.M."/>
            <person name="Burkhardt E."/>
            <person name="Benahmed M."/>
            <person name="Engel W."/>
        </authorList>
    </citation>
    <scope>NUCLEOTIDE SEQUENCE [MRNA]</scope>
    <source>
        <tissue>Testis</tissue>
    </source>
</reference>
<reference key="2">
    <citation type="journal article" date="1994" name="Genomics">
        <title>Structural organization of the porcine and human genes coding for a Leydig cell-specific insulin-like peptide (LEY I-L) and chromosomal localization of the human gene (INSL3).</title>
        <authorList>
            <person name="Burkhardt E."/>
            <person name="Adham I.M."/>
            <person name="Brosig B."/>
            <person name="Gastmann A."/>
            <person name="Mattei M.-G."/>
            <person name="Engel W."/>
        </authorList>
    </citation>
    <scope>NUCLEOTIDE SEQUENCE [GENOMIC DNA]</scope>
</reference>
<feature type="signal peptide" evidence="1">
    <location>
        <begin position="1"/>
        <end position="26"/>
    </location>
</feature>
<feature type="peptide" id="PRO_0000016149" description="Insulin-like 3 B chain">
    <location>
        <begin position="27"/>
        <end position="56"/>
    </location>
</feature>
<feature type="propeptide" id="PRO_0000016150" description="C peptide like" evidence="2">
    <location>
        <begin position="58"/>
        <end position="103"/>
    </location>
</feature>
<feature type="peptide" id="PRO_0000016151" description="Insulin-like 3 A chain">
    <location>
        <begin position="106"/>
        <end position="131"/>
    </location>
</feature>
<feature type="disulfide bond" description="Interchain (between B and A chains)" evidence="1">
    <location>
        <begin position="34"/>
        <end position="116"/>
    </location>
</feature>
<feature type="disulfide bond" description="Interchain (between B and A chains)" evidence="1">
    <location>
        <begin position="46"/>
        <end position="129"/>
    </location>
</feature>
<feature type="disulfide bond" evidence="1">
    <location>
        <begin position="115"/>
        <end position="120"/>
    </location>
</feature>
<gene>
    <name type="primary">INSL3</name>
    <name type="synonym">RLF</name>
</gene>
<keyword id="KW-0165">Cleavage on pair of basic residues</keyword>
<keyword id="KW-1015">Disulfide bond</keyword>
<keyword id="KW-0372">Hormone</keyword>
<keyword id="KW-1185">Reference proteome</keyword>
<keyword id="KW-0964">Secreted</keyword>
<keyword id="KW-0732">Signal</keyword>
<proteinExistence type="evidence at transcript level"/>
<accession>P51461</accession>
<dbReference type="EMBL" id="X68369">
    <property type="protein sequence ID" value="CAA48449.1"/>
    <property type="molecule type" value="mRNA"/>
</dbReference>
<dbReference type="EMBL" id="X73636">
    <property type="protein sequence ID" value="CAA52016.1"/>
    <property type="molecule type" value="Genomic_DNA"/>
</dbReference>
<dbReference type="PIR" id="A53024">
    <property type="entry name" value="A53024"/>
</dbReference>
<dbReference type="RefSeq" id="NP_999135.1">
    <property type="nucleotide sequence ID" value="NM_213970.1"/>
</dbReference>
<dbReference type="FunCoup" id="P51461">
    <property type="interactions" value="62"/>
</dbReference>
<dbReference type="STRING" id="9823.ENSSSCP00000014767"/>
<dbReference type="PaxDb" id="9823-ENSSSCP00000014767"/>
<dbReference type="Ensembl" id="ENSSSCT00000015173.5">
    <property type="protein sequence ID" value="ENSSSCP00000014767.2"/>
    <property type="gene ID" value="ENSSSCG00000013887.5"/>
</dbReference>
<dbReference type="Ensembl" id="ENSSSCT00015109318.1">
    <property type="protein sequence ID" value="ENSSSCP00015046461.1"/>
    <property type="gene ID" value="ENSSSCG00015080416.1"/>
</dbReference>
<dbReference type="Ensembl" id="ENSSSCT00025063112.1">
    <property type="protein sequence ID" value="ENSSSCP00025026866.1"/>
    <property type="gene ID" value="ENSSSCG00025046452.1"/>
</dbReference>
<dbReference type="Ensembl" id="ENSSSCT00030077875.1">
    <property type="protein sequence ID" value="ENSSSCP00030035579.1"/>
    <property type="gene ID" value="ENSSSCG00030055891.1"/>
</dbReference>
<dbReference type="Ensembl" id="ENSSSCT00035027250.1">
    <property type="protein sequence ID" value="ENSSSCP00035010421.1"/>
    <property type="gene ID" value="ENSSSCG00035020931.1"/>
</dbReference>
<dbReference type="Ensembl" id="ENSSSCT00040065681.1">
    <property type="protein sequence ID" value="ENSSSCP00040027817.1"/>
    <property type="gene ID" value="ENSSSCG00040048743.1"/>
</dbReference>
<dbReference type="Ensembl" id="ENSSSCT00045037752.1">
    <property type="protein sequence ID" value="ENSSSCP00045026242.1"/>
    <property type="gene ID" value="ENSSSCG00045022115.1"/>
</dbReference>
<dbReference type="Ensembl" id="ENSSSCT00050097668.1">
    <property type="protein sequence ID" value="ENSSSCP00050042083.1"/>
    <property type="gene ID" value="ENSSSCG00050071610.1"/>
</dbReference>
<dbReference type="Ensembl" id="ENSSSCT00055052190.1">
    <property type="protein sequence ID" value="ENSSSCP00055041698.1"/>
    <property type="gene ID" value="ENSSSCG00055026398.1"/>
</dbReference>
<dbReference type="Ensembl" id="ENSSSCT00060036887.1">
    <property type="protein sequence ID" value="ENSSSCP00060015703.1"/>
    <property type="gene ID" value="ENSSSCG00060027239.1"/>
</dbReference>
<dbReference type="Ensembl" id="ENSSSCT00065010555.1">
    <property type="protein sequence ID" value="ENSSSCP00065004386.1"/>
    <property type="gene ID" value="ENSSSCG00065007868.1"/>
</dbReference>
<dbReference type="Ensembl" id="ENSSSCT00070031208.1">
    <property type="protein sequence ID" value="ENSSSCP00070026013.1"/>
    <property type="gene ID" value="ENSSSCG00070015894.1"/>
</dbReference>
<dbReference type="Ensembl" id="ENSSSCT00105051542">
    <property type="protein sequence ID" value="ENSSSCP00105036318"/>
    <property type="gene ID" value="ENSSSCG00105027156"/>
</dbReference>
<dbReference type="Ensembl" id="ENSSSCT00110042131">
    <property type="protein sequence ID" value="ENSSSCP00110029584"/>
    <property type="gene ID" value="ENSSSCG00110021763"/>
</dbReference>
<dbReference type="Ensembl" id="ENSSSCT00115013172">
    <property type="protein sequence ID" value="ENSSSCP00115012442"/>
    <property type="gene ID" value="ENSSSCG00115007543"/>
</dbReference>
<dbReference type="Ensembl" id="ENSSSCT00130065114">
    <property type="protein sequence ID" value="ENSSSCP00130046710"/>
    <property type="gene ID" value="ENSSSCG00130033326"/>
</dbReference>
<dbReference type="GeneID" id="397024"/>
<dbReference type="KEGG" id="ssc:397024"/>
<dbReference type="CTD" id="3640"/>
<dbReference type="VGNC" id="VGNC:107147">
    <property type="gene designation" value="INSL3"/>
</dbReference>
<dbReference type="eggNOG" id="ENOG502TFQI">
    <property type="taxonomic scope" value="Eukaryota"/>
</dbReference>
<dbReference type="GeneTree" id="ENSGT00940000163613"/>
<dbReference type="HOGENOM" id="CLU_164865_0_0_1"/>
<dbReference type="InParanoid" id="P51461"/>
<dbReference type="OMA" id="NPAHHCC"/>
<dbReference type="OrthoDB" id="9448185at2759"/>
<dbReference type="TreeFam" id="TF106361"/>
<dbReference type="Reactome" id="R-SSC-418555">
    <property type="pathway name" value="G alpha (s) signalling events"/>
</dbReference>
<dbReference type="Reactome" id="R-SSC-444821">
    <property type="pathway name" value="Relaxin receptors"/>
</dbReference>
<dbReference type="Proteomes" id="UP000008227">
    <property type="component" value="Chromosome 2"/>
</dbReference>
<dbReference type="Proteomes" id="UP000314985">
    <property type="component" value="Chromosome 2"/>
</dbReference>
<dbReference type="Proteomes" id="UP000694570">
    <property type="component" value="Unplaced"/>
</dbReference>
<dbReference type="Proteomes" id="UP000694571">
    <property type="component" value="Unplaced"/>
</dbReference>
<dbReference type="Proteomes" id="UP000694720">
    <property type="component" value="Unplaced"/>
</dbReference>
<dbReference type="Proteomes" id="UP000694722">
    <property type="component" value="Unplaced"/>
</dbReference>
<dbReference type="Proteomes" id="UP000694723">
    <property type="component" value="Unplaced"/>
</dbReference>
<dbReference type="Proteomes" id="UP000694724">
    <property type="component" value="Unplaced"/>
</dbReference>
<dbReference type="Proteomes" id="UP000694725">
    <property type="component" value="Unplaced"/>
</dbReference>
<dbReference type="Proteomes" id="UP000694726">
    <property type="component" value="Unplaced"/>
</dbReference>
<dbReference type="Proteomes" id="UP000694727">
    <property type="component" value="Unplaced"/>
</dbReference>
<dbReference type="Proteomes" id="UP000694728">
    <property type="component" value="Unplaced"/>
</dbReference>
<dbReference type="Bgee" id="ENSSSCG00000013887">
    <property type="expression patterns" value="Expressed in testis and 6 other cell types or tissues"/>
</dbReference>
<dbReference type="GO" id="GO:0005615">
    <property type="term" value="C:extracellular space"/>
    <property type="evidence" value="ECO:0000318"/>
    <property type="project" value="GO_Central"/>
</dbReference>
<dbReference type="GO" id="GO:0005179">
    <property type="term" value="F:hormone activity"/>
    <property type="evidence" value="ECO:0007669"/>
    <property type="project" value="UniProtKB-KW"/>
</dbReference>
<dbReference type="GO" id="GO:0002020">
    <property type="term" value="F:protease binding"/>
    <property type="evidence" value="ECO:0007669"/>
    <property type="project" value="Ensembl"/>
</dbReference>
<dbReference type="GO" id="GO:0007193">
    <property type="term" value="P:adenylate cyclase-inhibiting G protein-coupled receptor signaling pathway"/>
    <property type="evidence" value="ECO:0000318"/>
    <property type="project" value="GO_Central"/>
</dbReference>
<dbReference type="GO" id="GO:0010634">
    <property type="term" value="P:positive regulation of epithelial cell migration"/>
    <property type="evidence" value="ECO:0007669"/>
    <property type="project" value="Ensembl"/>
</dbReference>
<dbReference type="GO" id="GO:0090303">
    <property type="term" value="P:positive regulation of wound healing"/>
    <property type="evidence" value="ECO:0007669"/>
    <property type="project" value="Ensembl"/>
</dbReference>
<dbReference type="CDD" id="cd04365">
    <property type="entry name" value="IlGF_relaxin_like"/>
    <property type="match status" value="1"/>
</dbReference>
<dbReference type="Gene3D" id="1.10.100.10">
    <property type="entry name" value="Insulin-like"/>
    <property type="match status" value="1"/>
</dbReference>
<dbReference type="InterPro" id="IPR043387">
    <property type="entry name" value="INSL3/INSL4"/>
</dbReference>
<dbReference type="InterPro" id="IPR016179">
    <property type="entry name" value="Insulin-like"/>
</dbReference>
<dbReference type="InterPro" id="IPR036438">
    <property type="entry name" value="Insulin-like_sf"/>
</dbReference>
<dbReference type="InterPro" id="IPR022353">
    <property type="entry name" value="Insulin_CS"/>
</dbReference>
<dbReference type="PANTHER" id="PTHR10423">
    <property type="entry name" value="INSULIN-LIKE 3"/>
    <property type="match status" value="1"/>
</dbReference>
<dbReference type="PANTHER" id="PTHR10423:SF3">
    <property type="entry name" value="INSULIN-LIKE 3"/>
    <property type="match status" value="1"/>
</dbReference>
<dbReference type="SMART" id="SM00078">
    <property type="entry name" value="IlGF"/>
    <property type="match status" value="1"/>
</dbReference>
<dbReference type="SUPFAM" id="SSF56994">
    <property type="entry name" value="Insulin-like"/>
    <property type="match status" value="1"/>
</dbReference>
<dbReference type="PROSITE" id="PS00262">
    <property type="entry name" value="INSULIN"/>
    <property type="match status" value="1"/>
</dbReference>
<comment type="function">
    <text evidence="1">Seems to play a role in testicular function. May be a trophic hormone with a role in testicular descent in fetal life. Is a ligand for LGR8 receptor (By similarity).</text>
</comment>
<comment type="subunit">
    <text evidence="1">Heterodimer of a B chain and an A chain linked by two disulfide bonds.</text>
</comment>
<comment type="subcellular location">
    <subcellularLocation>
        <location>Secreted</location>
    </subcellularLocation>
</comment>
<comment type="tissue specificity">
    <text>Expressed exclusively in prenatal and postnatal Leydig cells.</text>
</comment>
<comment type="similarity">
    <text evidence="3">Belongs to the insulin family.</text>
</comment>
<protein>
    <recommendedName>
        <fullName>Insulin-like 3</fullName>
    </recommendedName>
    <alternativeName>
        <fullName>Leydig insulin-like peptide</fullName>
        <shortName>Ley-I-L</shortName>
    </alternativeName>
    <alternativeName>
        <fullName>Relaxin-like factor</fullName>
    </alternativeName>
    <component>
        <recommendedName>
            <fullName>Insulin-like 3 B chain</fullName>
        </recommendedName>
    </component>
    <component>
        <recommendedName>
            <fullName>Insulin-like 3 A chain</fullName>
        </recommendedName>
    </component>
</protein>
<name>INSL3_PIG</name>
<organism>
    <name type="scientific">Sus scrofa</name>
    <name type="common">Pig</name>
    <dbReference type="NCBI Taxonomy" id="9823"/>
    <lineage>
        <taxon>Eukaryota</taxon>
        <taxon>Metazoa</taxon>
        <taxon>Chordata</taxon>
        <taxon>Craniata</taxon>
        <taxon>Vertebrata</taxon>
        <taxon>Euteleostomi</taxon>
        <taxon>Mammalia</taxon>
        <taxon>Eutheria</taxon>
        <taxon>Laurasiatheria</taxon>
        <taxon>Artiodactyla</taxon>
        <taxon>Suina</taxon>
        <taxon>Suidae</taxon>
        <taxon>Sus</taxon>
    </lineage>
</organism>
<evidence type="ECO:0000250" key="1"/>
<evidence type="ECO:0000255" key="2"/>
<evidence type="ECO:0000305" key="3"/>
<sequence>MDPHPLTWALVLLGPALALSRAPAPAQEAPEKLCGHHFVRALVRLCGGPRWSPEDGRAVAGGDRELLQWLEGQHLFHGLMASGDPMLVLAPQPPPQASGHHHHRRAAATNPARHCCLSGCTRQDLLTLCPH</sequence>